<protein>
    <recommendedName>
        <fullName evidence="1">Pyruvoyl-dependent arginine decarboxylase</fullName>
        <shortName evidence="1">PvlArgDC</shortName>
        <ecNumber evidence="1">4.1.1.19</ecNumber>
    </recommendedName>
    <component>
        <recommendedName>
            <fullName evidence="1">Pyruvoyl-dependent arginine decarboxylase subunit beta</fullName>
        </recommendedName>
    </component>
    <component>
        <recommendedName>
            <fullName evidence="1">Pyruvoyl-dependent arginine decarboxylase subunit alpha</fullName>
        </recommendedName>
    </component>
</protein>
<feature type="chain" id="PRO_1000068397" description="Pyruvoyl-dependent arginine decarboxylase subunit beta" evidence="1">
    <location>
        <begin position="1"/>
        <end position="51"/>
    </location>
</feature>
<feature type="chain" id="PRO_1000068398" description="Pyruvoyl-dependent arginine decarboxylase subunit alpha" evidence="1">
    <location>
        <begin position="52"/>
        <end position="164"/>
    </location>
</feature>
<feature type="site" description="Cleavage (non-hydrolytic)" evidence="1">
    <location>
        <begin position="51"/>
        <end position="52"/>
    </location>
</feature>
<feature type="modified residue" description="Pyruvic acid (Ser)" evidence="1">
    <location>
        <position position="52"/>
    </location>
</feature>
<evidence type="ECO:0000255" key="1">
    <source>
        <dbReference type="HAMAP-Rule" id="MF_01404"/>
    </source>
</evidence>
<sequence>MMKTSAIHSPFEAPNTISLVAGTGDANNPLNAFDMSLLESGIGNLNLIRISSIMPPKAAIIPLPKIPQGSLVPTAYGYQISEVKGETVAAGISVAVPKDKELCGLIMEYECIGGKKECEDTVRNMAKEGFEMRGWEIDEIISIASEHTVENIGCAFAAAALWYK</sequence>
<name>PDAD_METM7</name>
<dbReference type="EC" id="4.1.1.19" evidence="1"/>
<dbReference type="EMBL" id="CP000745">
    <property type="protein sequence ID" value="ABR65896.1"/>
    <property type="molecule type" value="Genomic_DNA"/>
</dbReference>
<dbReference type="SMR" id="A6VHH0"/>
<dbReference type="STRING" id="426368.MmarC7_0829"/>
<dbReference type="KEGG" id="mmz:MmarC7_0829"/>
<dbReference type="eggNOG" id="arCOG04490">
    <property type="taxonomic scope" value="Archaea"/>
</dbReference>
<dbReference type="HOGENOM" id="CLU_114389_2_0_2"/>
<dbReference type="OrthoDB" id="30748at2157"/>
<dbReference type="GO" id="GO:0008792">
    <property type="term" value="F:arginine decarboxylase activity"/>
    <property type="evidence" value="ECO:0007669"/>
    <property type="project" value="UniProtKB-UniRule"/>
</dbReference>
<dbReference type="GO" id="GO:0006527">
    <property type="term" value="P:arginine catabolic process"/>
    <property type="evidence" value="ECO:0007669"/>
    <property type="project" value="InterPro"/>
</dbReference>
<dbReference type="Gene3D" id="3.30.60.30">
    <property type="match status" value="1"/>
</dbReference>
<dbReference type="Gene3D" id="3.50.20.10">
    <property type="entry name" value="Pyruvoyl-Dependent Histidine Decarboxylase, subunit B"/>
    <property type="match status" value="1"/>
</dbReference>
<dbReference type="HAMAP" id="MF_01404">
    <property type="entry name" value="PvlArgDC"/>
    <property type="match status" value="1"/>
</dbReference>
<dbReference type="InterPro" id="IPR016104">
    <property type="entry name" value="Pyr-dep_his/arg-deCO2ase"/>
</dbReference>
<dbReference type="InterPro" id="IPR016105">
    <property type="entry name" value="Pyr-dep_his/arg-deCO2ase_sand"/>
</dbReference>
<dbReference type="InterPro" id="IPR002724">
    <property type="entry name" value="Pyruvoyl-dep_arg_deCO2ase"/>
</dbReference>
<dbReference type="NCBIfam" id="TIGR00286">
    <property type="entry name" value="pyruvoyl-dependent arginine decarboxylase"/>
    <property type="match status" value="1"/>
</dbReference>
<dbReference type="PANTHER" id="PTHR40438">
    <property type="entry name" value="PYRUVOYL-DEPENDENT ARGININE DECARBOXYLASE"/>
    <property type="match status" value="1"/>
</dbReference>
<dbReference type="PANTHER" id="PTHR40438:SF1">
    <property type="entry name" value="PYRUVOYL-DEPENDENT ARGININE DECARBOXYLASE"/>
    <property type="match status" value="1"/>
</dbReference>
<dbReference type="Pfam" id="PF01862">
    <property type="entry name" value="PvlArgDC"/>
    <property type="match status" value="1"/>
</dbReference>
<dbReference type="PIRSF" id="PIRSF005216">
    <property type="entry name" value="Pyruvoyl-dep_arg_deCO2ase"/>
    <property type="match status" value="1"/>
</dbReference>
<dbReference type="SFLD" id="SFLDF00471">
    <property type="entry name" value="Pyruvoyl-dependent_arginine_de"/>
    <property type="match status" value="1"/>
</dbReference>
<dbReference type="SFLD" id="SFLDG01170">
    <property type="entry name" value="Pyruvoyl-dependent_arginine_de"/>
    <property type="match status" value="1"/>
</dbReference>
<dbReference type="SFLD" id="SFLDS00055">
    <property type="entry name" value="Pyruvoyl-Dependent_Histidine/A"/>
    <property type="match status" value="1"/>
</dbReference>
<dbReference type="SUPFAM" id="SSF56271">
    <property type="entry name" value="Pyruvoyl-dependent histidine and arginine decarboxylases"/>
    <property type="match status" value="1"/>
</dbReference>
<organism>
    <name type="scientific">Methanococcus maripaludis (strain C7 / ATCC BAA-1331)</name>
    <dbReference type="NCBI Taxonomy" id="426368"/>
    <lineage>
        <taxon>Archaea</taxon>
        <taxon>Methanobacteriati</taxon>
        <taxon>Methanobacteriota</taxon>
        <taxon>Methanomada group</taxon>
        <taxon>Methanococci</taxon>
        <taxon>Methanococcales</taxon>
        <taxon>Methanococcaceae</taxon>
        <taxon>Methanococcus</taxon>
    </lineage>
</organism>
<gene>
    <name evidence="1" type="primary">pdaD</name>
    <name type="ordered locus">MmarC7_0829</name>
</gene>
<accession>A6VHH0</accession>
<proteinExistence type="inferred from homology"/>
<comment type="catalytic activity">
    <reaction evidence="1">
        <text>L-arginine + H(+) = agmatine + CO2</text>
        <dbReference type="Rhea" id="RHEA:17641"/>
        <dbReference type="ChEBI" id="CHEBI:15378"/>
        <dbReference type="ChEBI" id="CHEBI:16526"/>
        <dbReference type="ChEBI" id="CHEBI:32682"/>
        <dbReference type="ChEBI" id="CHEBI:58145"/>
        <dbReference type="EC" id="4.1.1.19"/>
    </reaction>
</comment>
<comment type="cofactor">
    <cofactor evidence="1">
        <name>pyruvate</name>
        <dbReference type="ChEBI" id="CHEBI:15361"/>
    </cofactor>
    <text evidence="1">Binds 1 pyruvoyl group covalently per subunit.</text>
</comment>
<comment type="similarity">
    <text evidence="1">Belongs to the PdaD family.</text>
</comment>
<keyword id="KW-0210">Decarboxylase</keyword>
<keyword id="KW-0456">Lyase</keyword>
<keyword id="KW-0670">Pyruvate</keyword>
<reference key="1">
    <citation type="submission" date="2007-06" db="EMBL/GenBank/DDBJ databases">
        <title>Complete sequence of Methanococcus maripaludis C7.</title>
        <authorList>
            <consortium name="US DOE Joint Genome Institute"/>
            <person name="Copeland A."/>
            <person name="Lucas S."/>
            <person name="Lapidus A."/>
            <person name="Barry K."/>
            <person name="Glavina del Rio T."/>
            <person name="Dalin E."/>
            <person name="Tice H."/>
            <person name="Pitluck S."/>
            <person name="Clum A."/>
            <person name="Schmutz J."/>
            <person name="Larimer F."/>
            <person name="Land M."/>
            <person name="Hauser L."/>
            <person name="Kyrpides N."/>
            <person name="Anderson I."/>
            <person name="Sieprawska-Lupa M."/>
            <person name="Whitman W.B."/>
            <person name="Richardson P."/>
        </authorList>
    </citation>
    <scope>NUCLEOTIDE SEQUENCE [LARGE SCALE GENOMIC DNA]</scope>
    <source>
        <strain>C7 / ATCC BAA-1331</strain>
    </source>
</reference>